<evidence type="ECO:0000250" key="1"/>
<evidence type="ECO:0000255" key="2">
    <source>
        <dbReference type="HAMAP-Rule" id="MF_00403"/>
    </source>
</evidence>
<evidence type="ECO:0000256" key="3">
    <source>
        <dbReference type="SAM" id="MobiDB-lite"/>
    </source>
</evidence>
<evidence type="ECO:0000305" key="4"/>
<proteinExistence type="inferred from homology"/>
<accession>C4XLW8</accession>
<feature type="chain" id="PRO_1000205911" description="Small ribosomal subunit protein uS12">
    <location>
        <begin position="1"/>
        <end position="123"/>
    </location>
</feature>
<feature type="region of interest" description="Disordered" evidence="3">
    <location>
        <begin position="101"/>
        <end position="123"/>
    </location>
</feature>
<feature type="compositionally biased region" description="Basic residues" evidence="3">
    <location>
        <begin position="113"/>
        <end position="123"/>
    </location>
</feature>
<feature type="modified residue" description="3-methylthioaspartic acid" evidence="1">
    <location>
        <position position="89"/>
    </location>
</feature>
<name>RS12_SOLM1</name>
<sequence>MPTINQLIRKERAKVSKRRKTPALQACPQRRGVCTRVYTTTPKKPNSALRKVARVRLTNGIEVTSYIPGEGHNLQEHSVVMIRGGRVKDLPGVRYHIIRGTLDTSGVSDRRQSRSKYGAKRPK</sequence>
<keyword id="KW-0488">Methylation</keyword>
<keyword id="KW-0687">Ribonucleoprotein</keyword>
<keyword id="KW-0689">Ribosomal protein</keyword>
<keyword id="KW-0694">RNA-binding</keyword>
<keyword id="KW-0699">rRNA-binding</keyword>
<keyword id="KW-0820">tRNA-binding</keyword>
<protein>
    <recommendedName>
        <fullName evidence="2">Small ribosomal subunit protein uS12</fullName>
    </recommendedName>
    <alternativeName>
        <fullName evidence="4">30S ribosomal protein S12</fullName>
    </alternativeName>
</protein>
<organism>
    <name type="scientific">Solidesulfovibrio magneticus (strain ATCC 700980 / DSM 13731 / RS-1)</name>
    <name type="common">Desulfovibrio magneticus</name>
    <dbReference type="NCBI Taxonomy" id="573370"/>
    <lineage>
        <taxon>Bacteria</taxon>
        <taxon>Pseudomonadati</taxon>
        <taxon>Thermodesulfobacteriota</taxon>
        <taxon>Desulfovibrionia</taxon>
        <taxon>Desulfovibrionales</taxon>
        <taxon>Desulfovibrionaceae</taxon>
        <taxon>Solidesulfovibrio</taxon>
    </lineage>
</organism>
<comment type="function">
    <text evidence="2">With S4 and S5 plays an important role in translational accuracy.</text>
</comment>
<comment type="function">
    <text evidence="2">Interacts with and stabilizes bases of the 16S rRNA that are involved in tRNA selection in the A site and with the mRNA backbone. Located at the interface of the 30S and 50S subunits, it traverses the body of the 30S subunit contacting proteins on the other side and probably holding the rRNA structure together. The combined cluster of proteins S8, S12 and S17 appears to hold together the shoulder and platform of the 30S subunit.</text>
</comment>
<comment type="subunit">
    <text evidence="2">Part of the 30S ribosomal subunit. Contacts proteins S8 and S17. May interact with IF1 in the 30S initiation complex.</text>
</comment>
<comment type="similarity">
    <text evidence="2">Belongs to the universal ribosomal protein uS12 family.</text>
</comment>
<dbReference type="EMBL" id="AP010904">
    <property type="protein sequence ID" value="BAH74706.1"/>
    <property type="molecule type" value="Genomic_DNA"/>
</dbReference>
<dbReference type="RefSeq" id="WP_006918780.1">
    <property type="nucleotide sequence ID" value="NC_012796.1"/>
</dbReference>
<dbReference type="SMR" id="C4XLW8"/>
<dbReference type="STRING" id="573370.DMR_12150"/>
<dbReference type="KEGG" id="dma:DMR_12150"/>
<dbReference type="eggNOG" id="COG0048">
    <property type="taxonomic scope" value="Bacteria"/>
</dbReference>
<dbReference type="HOGENOM" id="CLU_104295_1_2_7"/>
<dbReference type="OrthoDB" id="9802366at2"/>
<dbReference type="Proteomes" id="UP000009071">
    <property type="component" value="Chromosome"/>
</dbReference>
<dbReference type="GO" id="GO:0015935">
    <property type="term" value="C:small ribosomal subunit"/>
    <property type="evidence" value="ECO:0007669"/>
    <property type="project" value="InterPro"/>
</dbReference>
<dbReference type="GO" id="GO:0019843">
    <property type="term" value="F:rRNA binding"/>
    <property type="evidence" value="ECO:0007669"/>
    <property type="project" value="UniProtKB-UniRule"/>
</dbReference>
<dbReference type="GO" id="GO:0003735">
    <property type="term" value="F:structural constituent of ribosome"/>
    <property type="evidence" value="ECO:0007669"/>
    <property type="project" value="InterPro"/>
</dbReference>
<dbReference type="GO" id="GO:0000049">
    <property type="term" value="F:tRNA binding"/>
    <property type="evidence" value="ECO:0007669"/>
    <property type="project" value="UniProtKB-UniRule"/>
</dbReference>
<dbReference type="GO" id="GO:0006412">
    <property type="term" value="P:translation"/>
    <property type="evidence" value="ECO:0007669"/>
    <property type="project" value="UniProtKB-UniRule"/>
</dbReference>
<dbReference type="CDD" id="cd03368">
    <property type="entry name" value="Ribosomal_S12"/>
    <property type="match status" value="1"/>
</dbReference>
<dbReference type="FunFam" id="2.40.50.140:FF:000001">
    <property type="entry name" value="30S ribosomal protein S12"/>
    <property type="match status" value="1"/>
</dbReference>
<dbReference type="Gene3D" id="2.40.50.140">
    <property type="entry name" value="Nucleic acid-binding proteins"/>
    <property type="match status" value="1"/>
</dbReference>
<dbReference type="HAMAP" id="MF_00403_B">
    <property type="entry name" value="Ribosomal_uS12_B"/>
    <property type="match status" value="1"/>
</dbReference>
<dbReference type="InterPro" id="IPR012340">
    <property type="entry name" value="NA-bd_OB-fold"/>
</dbReference>
<dbReference type="InterPro" id="IPR006032">
    <property type="entry name" value="Ribosomal_uS12"/>
</dbReference>
<dbReference type="InterPro" id="IPR005679">
    <property type="entry name" value="Ribosomal_uS12_bac"/>
</dbReference>
<dbReference type="NCBIfam" id="TIGR00981">
    <property type="entry name" value="rpsL_bact"/>
    <property type="match status" value="1"/>
</dbReference>
<dbReference type="PANTHER" id="PTHR11652">
    <property type="entry name" value="30S RIBOSOMAL PROTEIN S12 FAMILY MEMBER"/>
    <property type="match status" value="1"/>
</dbReference>
<dbReference type="Pfam" id="PF00164">
    <property type="entry name" value="Ribosom_S12_S23"/>
    <property type="match status" value="1"/>
</dbReference>
<dbReference type="PIRSF" id="PIRSF002133">
    <property type="entry name" value="Ribosomal_S12/S23"/>
    <property type="match status" value="1"/>
</dbReference>
<dbReference type="PRINTS" id="PR01034">
    <property type="entry name" value="RIBOSOMALS12"/>
</dbReference>
<dbReference type="SUPFAM" id="SSF50249">
    <property type="entry name" value="Nucleic acid-binding proteins"/>
    <property type="match status" value="1"/>
</dbReference>
<dbReference type="PROSITE" id="PS00055">
    <property type="entry name" value="RIBOSOMAL_S12"/>
    <property type="match status" value="1"/>
</dbReference>
<reference key="1">
    <citation type="journal article" date="2009" name="Genome Res.">
        <title>Whole genome sequence of Desulfovibrio magneticus strain RS-1 revealed common gene clusters in magnetotactic bacteria.</title>
        <authorList>
            <person name="Nakazawa H."/>
            <person name="Arakaki A."/>
            <person name="Narita-Yamada S."/>
            <person name="Yashiro I."/>
            <person name="Jinno K."/>
            <person name="Aoki N."/>
            <person name="Tsuruyama A."/>
            <person name="Okamura Y."/>
            <person name="Tanikawa S."/>
            <person name="Fujita N."/>
            <person name="Takeyama H."/>
            <person name="Matsunaga T."/>
        </authorList>
    </citation>
    <scope>NUCLEOTIDE SEQUENCE [LARGE SCALE GENOMIC DNA]</scope>
    <source>
        <strain>ATCC 700980 / DSM 13731 / RS-1</strain>
    </source>
</reference>
<gene>
    <name evidence="2" type="primary">rpsL</name>
    <name type="ordered locus">DMR_12150</name>
</gene>